<sequence>MVAPMASKIEVSIVDQNPVVRTGLETLLVRDGRFSVSGIYASGEDLLAALQTKPVEIVIVGWSLPDMTGGDVLTRVRKEKWRTRIIIYTGERSSEVLRTAIKSGAWGFVAKTEEPQVLLEAVVSVARGRLSLPYVDIDLLNHDPLESLTARERELLAALANGWTNLQIAARTGISRNTVKYHLKNLYDKLGVSNRAMAVALHVSINRNEHR</sequence>
<name>SGAR_HYPME</name>
<reference key="1">
    <citation type="journal article" date="1996" name="Eur. J. Biochem.">
        <title>Cloning and expression of the gene for serine-glyoxylate aminotransferase from an obligate methylotroph Hyphomicrobium methylovorum GM2.</title>
        <authorList>
            <person name="Hagishita T."/>
            <person name="Yoshida T."/>
            <person name="Izumi Y."/>
            <person name="Mitsunaga T."/>
        </authorList>
    </citation>
    <scope>NUCLEOTIDE SEQUENCE [GENOMIC DNA]</scope>
    <source>
        <strain>GM2</strain>
    </source>
</reference>
<reference key="2">
    <citation type="journal article" date="1998" name="J. Mol. Biol.">
        <title>The entericidin locus of Escherichia coli and its implications for programmed bacterial cell death.</title>
        <authorList>
            <person name="Bishop R.E."/>
            <person name="Leskiw B.K."/>
            <person name="Hodges R.S."/>
            <person name="Kay C.M."/>
            <person name="Weiner J.H."/>
        </authorList>
    </citation>
    <scope>IDENTIFICATION</scope>
</reference>
<comment type="function">
    <text>Not known. Could act on the sgaA gene expression.</text>
</comment>
<proteinExistence type="inferred from homology"/>
<keyword id="KW-0238">DNA-binding</keyword>
<keyword id="KW-0597">Phosphoprotein</keyword>
<keyword id="KW-0804">Transcription</keyword>
<keyword id="KW-0805">Transcription regulation</keyword>
<protein>
    <recommendedName>
        <fullName>Probable transcriptional regulatory protein SgaR</fullName>
    </recommendedName>
</protein>
<organism>
    <name type="scientific">Hyphomicrobium methylovorum</name>
    <dbReference type="NCBI Taxonomy" id="84"/>
    <lineage>
        <taxon>Bacteria</taxon>
        <taxon>Pseudomonadati</taxon>
        <taxon>Pseudomonadota</taxon>
        <taxon>Alphaproteobacteria</taxon>
        <taxon>Hyphomicrobiales</taxon>
        <taxon>Hyphomicrobiaceae</taxon>
        <taxon>Hyphomicrobium</taxon>
    </lineage>
</organism>
<feature type="chain" id="PRO_0000184188" description="Probable transcriptional regulatory protein SgaR">
    <location>
        <begin position="1"/>
        <end position="211"/>
    </location>
</feature>
<feature type="domain" description="Response regulatory" evidence="1">
    <location>
        <begin position="10"/>
        <end position="126"/>
    </location>
</feature>
<feature type="domain" description="HTH luxR-type" evidence="2">
    <location>
        <begin position="141"/>
        <end position="206"/>
    </location>
</feature>
<feature type="DNA-binding region" description="H-T-H motif" evidence="2">
    <location>
        <begin position="165"/>
        <end position="184"/>
    </location>
</feature>
<feature type="modified residue" description="4-aspartylphosphate" evidence="1">
    <location>
        <position position="15"/>
    </location>
</feature>
<gene>
    <name type="primary">sgaR</name>
</gene>
<evidence type="ECO:0000255" key="1">
    <source>
        <dbReference type="PROSITE-ProRule" id="PRU00169"/>
    </source>
</evidence>
<evidence type="ECO:0000255" key="2">
    <source>
        <dbReference type="PROSITE-ProRule" id="PRU00411"/>
    </source>
</evidence>
<dbReference type="EMBL" id="D86125">
    <property type="status" value="NOT_ANNOTATED_CDS"/>
    <property type="molecule type" value="Genomic_DNA"/>
</dbReference>
<dbReference type="SMR" id="P56644"/>
<dbReference type="GO" id="GO:0003677">
    <property type="term" value="F:DNA binding"/>
    <property type="evidence" value="ECO:0007669"/>
    <property type="project" value="UniProtKB-KW"/>
</dbReference>
<dbReference type="GO" id="GO:0000160">
    <property type="term" value="P:phosphorelay signal transduction system"/>
    <property type="evidence" value="ECO:0007669"/>
    <property type="project" value="InterPro"/>
</dbReference>
<dbReference type="GO" id="GO:0006355">
    <property type="term" value="P:regulation of DNA-templated transcription"/>
    <property type="evidence" value="ECO:0007669"/>
    <property type="project" value="InterPro"/>
</dbReference>
<dbReference type="CDD" id="cd06170">
    <property type="entry name" value="LuxR_C_like"/>
    <property type="match status" value="1"/>
</dbReference>
<dbReference type="CDD" id="cd17535">
    <property type="entry name" value="REC_NarL-like"/>
    <property type="match status" value="1"/>
</dbReference>
<dbReference type="Gene3D" id="3.40.50.2300">
    <property type="match status" value="1"/>
</dbReference>
<dbReference type="Gene3D" id="1.10.10.10">
    <property type="entry name" value="Winged helix-like DNA-binding domain superfamily/Winged helix DNA-binding domain"/>
    <property type="match status" value="1"/>
</dbReference>
<dbReference type="InterPro" id="IPR011006">
    <property type="entry name" value="CheY-like_superfamily"/>
</dbReference>
<dbReference type="InterPro" id="IPR016032">
    <property type="entry name" value="Sig_transdc_resp-reg_C-effctor"/>
</dbReference>
<dbReference type="InterPro" id="IPR001789">
    <property type="entry name" value="Sig_transdc_resp-reg_receiver"/>
</dbReference>
<dbReference type="InterPro" id="IPR000792">
    <property type="entry name" value="Tscrpt_reg_LuxR_C"/>
</dbReference>
<dbReference type="InterPro" id="IPR039420">
    <property type="entry name" value="WalR-like"/>
</dbReference>
<dbReference type="InterPro" id="IPR036388">
    <property type="entry name" value="WH-like_DNA-bd_sf"/>
</dbReference>
<dbReference type="PANTHER" id="PTHR43214">
    <property type="entry name" value="TWO-COMPONENT RESPONSE REGULATOR"/>
    <property type="match status" value="1"/>
</dbReference>
<dbReference type="Pfam" id="PF00196">
    <property type="entry name" value="GerE"/>
    <property type="match status" value="1"/>
</dbReference>
<dbReference type="Pfam" id="PF00072">
    <property type="entry name" value="Response_reg"/>
    <property type="match status" value="1"/>
</dbReference>
<dbReference type="PRINTS" id="PR00038">
    <property type="entry name" value="HTHLUXR"/>
</dbReference>
<dbReference type="SMART" id="SM00421">
    <property type="entry name" value="HTH_LUXR"/>
    <property type="match status" value="1"/>
</dbReference>
<dbReference type="SMART" id="SM00448">
    <property type="entry name" value="REC"/>
    <property type="match status" value="1"/>
</dbReference>
<dbReference type="SUPFAM" id="SSF46894">
    <property type="entry name" value="C-terminal effector domain of the bipartite response regulators"/>
    <property type="match status" value="1"/>
</dbReference>
<dbReference type="SUPFAM" id="SSF52172">
    <property type="entry name" value="CheY-like"/>
    <property type="match status" value="1"/>
</dbReference>
<dbReference type="PROSITE" id="PS00622">
    <property type="entry name" value="HTH_LUXR_1"/>
    <property type="match status" value="1"/>
</dbReference>
<dbReference type="PROSITE" id="PS50043">
    <property type="entry name" value="HTH_LUXR_2"/>
    <property type="match status" value="1"/>
</dbReference>
<dbReference type="PROSITE" id="PS50110">
    <property type="entry name" value="RESPONSE_REGULATORY"/>
    <property type="match status" value="1"/>
</dbReference>
<accession>P56644</accession>